<evidence type="ECO:0000256" key="1">
    <source>
        <dbReference type="SAM" id="MobiDB-lite"/>
    </source>
</evidence>
<evidence type="ECO:0000305" key="2"/>
<keyword id="KW-1185">Reference proteome</keyword>
<keyword id="KW-0687">Ribonucleoprotein</keyword>
<keyword id="KW-0689">Ribosomal protein</keyword>
<reference key="1">
    <citation type="journal article" date="2002" name="Science">
        <title>The genome sequence of the malaria mosquito Anopheles gambiae.</title>
        <authorList>
            <person name="Holt R.A."/>
            <person name="Subramanian G.M."/>
            <person name="Halpern A."/>
            <person name="Sutton G.G."/>
            <person name="Charlab R."/>
            <person name="Nusskern D.R."/>
            <person name="Wincker P."/>
            <person name="Clark A.G."/>
            <person name="Ribeiro J.M.C."/>
            <person name="Wides R."/>
            <person name="Salzberg S.L."/>
            <person name="Loftus B.J."/>
            <person name="Yandell M.D."/>
            <person name="Majoros W.H."/>
            <person name="Rusch D.B."/>
            <person name="Lai Z."/>
            <person name="Kraft C.L."/>
            <person name="Abril J.F."/>
            <person name="Anthouard V."/>
            <person name="Arensburger P."/>
            <person name="Atkinson P.W."/>
            <person name="Baden H."/>
            <person name="de Berardinis V."/>
            <person name="Baldwin D."/>
            <person name="Benes V."/>
            <person name="Biedler J."/>
            <person name="Blass C."/>
            <person name="Bolanos R."/>
            <person name="Boscus D."/>
            <person name="Barnstead M."/>
            <person name="Cai S."/>
            <person name="Center A."/>
            <person name="Chaturverdi K."/>
            <person name="Christophides G.K."/>
            <person name="Chrystal M.A.M."/>
            <person name="Clamp M."/>
            <person name="Cravchik A."/>
            <person name="Curwen V."/>
            <person name="Dana A."/>
            <person name="Delcher A."/>
            <person name="Dew I."/>
            <person name="Evans C.A."/>
            <person name="Flanigan M."/>
            <person name="Grundschober-Freimoser A."/>
            <person name="Friedli L."/>
            <person name="Gu Z."/>
            <person name="Guan P."/>
            <person name="Guigo R."/>
            <person name="Hillenmeyer M.E."/>
            <person name="Hladun S.L."/>
            <person name="Hogan J.R."/>
            <person name="Hong Y.S."/>
            <person name="Hoover J."/>
            <person name="Jaillon O."/>
            <person name="Ke Z."/>
            <person name="Kodira C.D."/>
            <person name="Kokoza E."/>
            <person name="Koutsos A."/>
            <person name="Letunic I."/>
            <person name="Levitsky A.A."/>
            <person name="Liang Y."/>
            <person name="Lin J.-J."/>
            <person name="Lobo N.F."/>
            <person name="Lopez J.R."/>
            <person name="Malek J.A."/>
            <person name="McIntosh T.C."/>
            <person name="Meister S."/>
            <person name="Miller J.R."/>
            <person name="Mobarry C."/>
            <person name="Mongin E."/>
            <person name="Murphy S.D."/>
            <person name="O'Brochta D.A."/>
            <person name="Pfannkoch C."/>
            <person name="Qi R."/>
            <person name="Regier M.A."/>
            <person name="Remington K."/>
            <person name="Shao H."/>
            <person name="Sharakhova M.V."/>
            <person name="Sitter C.D."/>
            <person name="Shetty J."/>
            <person name="Smith T.J."/>
            <person name="Strong R."/>
            <person name="Sun J."/>
            <person name="Thomasova D."/>
            <person name="Ton L.Q."/>
            <person name="Topalis P."/>
            <person name="Tu Z.J."/>
            <person name="Unger M.F."/>
            <person name="Walenz B."/>
            <person name="Wang A.H."/>
            <person name="Wang J."/>
            <person name="Wang M."/>
            <person name="Wang X."/>
            <person name="Woodford K.J."/>
            <person name="Wortman J.R."/>
            <person name="Wu M."/>
            <person name="Yao A."/>
            <person name="Zdobnov E.M."/>
            <person name="Zhang H."/>
            <person name="Zhao Q."/>
            <person name="Zhao S."/>
            <person name="Zhu S.C."/>
            <person name="Zhimulev I."/>
            <person name="Coluzzi M."/>
            <person name="della Torre A."/>
            <person name="Roth C.W."/>
            <person name="Louis C."/>
            <person name="Kalush F."/>
            <person name="Mural R.J."/>
            <person name="Myers E.W."/>
            <person name="Adams M.D."/>
            <person name="Smith H.O."/>
            <person name="Broder S."/>
            <person name="Gardner M.J."/>
            <person name="Fraser C.M."/>
            <person name="Birney E."/>
            <person name="Bork P."/>
            <person name="Brey P.T."/>
            <person name="Venter J.C."/>
            <person name="Weissenbach J."/>
            <person name="Kafatos F.C."/>
            <person name="Collins F.H."/>
            <person name="Hoffman S.L."/>
        </authorList>
    </citation>
    <scope>NUCLEOTIDE SEQUENCE [LARGE SCALE GENOMIC DNA]</scope>
    <source>
        <strain>PEST</strain>
    </source>
</reference>
<accession>A0NGY0</accession>
<gene>
    <name type="primary">RpL17</name>
    <name type="ORF">AGAP001459</name>
</gene>
<proteinExistence type="inferred from homology"/>
<organism>
    <name type="scientific">Anopheles gambiae</name>
    <name type="common">African malaria mosquito</name>
    <dbReference type="NCBI Taxonomy" id="7165"/>
    <lineage>
        <taxon>Eukaryota</taxon>
        <taxon>Metazoa</taxon>
        <taxon>Ecdysozoa</taxon>
        <taxon>Arthropoda</taxon>
        <taxon>Hexapoda</taxon>
        <taxon>Insecta</taxon>
        <taxon>Pterygota</taxon>
        <taxon>Neoptera</taxon>
        <taxon>Endopterygota</taxon>
        <taxon>Diptera</taxon>
        <taxon>Nematocera</taxon>
        <taxon>Culicoidea</taxon>
        <taxon>Culicidae</taxon>
        <taxon>Anophelinae</taxon>
        <taxon>Anopheles</taxon>
    </lineage>
</organism>
<sequence length="187" mass="21678">MGRYAKEPDNASKSCKSRGSNLRVHFKNTRETALAIKRMPLRRAQRFLKNVIEKKECVPFRRFNGGVGRCAQAKHWGTSVGRWPKKSAEFLLQLLKNAEANADYKGLDVDRLVINHIQVNRAPCLRRRTYRAHGRINPYMSSPCHIELSLTEKEDVVTKATDESEQAKKKLSKKKLQRQKEKMMRNE</sequence>
<feature type="chain" id="PRO_0000323406" description="Large ribosomal subunit protein uL22">
    <location>
        <begin position="1"/>
        <end position="187"/>
    </location>
</feature>
<feature type="region of interest" description="Disordered" evidence="1">
    <location>
        <begin position="158"/>
        <end position="187"/>
    </location>
</feature>
<feature type="compositionally biased region" description="Basic and acidic residues" evidence="1">
    <location>
        <begin position="158"/>
        <end position="168"/>
    </location>
</feature>
<feature type="compositionally biased region" description="Basic and acidic residues" evidence="1">
    <location>
        <begin position="178"/>
        <end position="187"/>
    </location>
</feature>
<protein>
    <recommendedName>
        <fullName evidence="2">Large ribosomal subunit protein uL22</fullName>
    </recommendedName>
    <alternativeName>
        <fullName>60S ribosomal protein L17</fullName>
    </alternativeName>
</protein>
<name>RL17_ANOGA</name>
<comment type="similarity">
    <text evidence="2">Belongs to the universal ribosomal protein uL22 family.</text>
</comment>
<dbReference type="EMBL" id="AAAB01008987">
    <property type="protein sequence ID" value="EAL38592.1"/>
    <property type="molecule type" value="Genomic_DNA"/>
</dbReference>
<dbReference type="RefSeq" id="XP_003435845.1">
    <property type="nucleotide sequence ID" value="XM_003435797.1"/>
</dbReference>
<dbReference type="SMR" id="A0NGY0"/>
<dbReference type="FunCoup" id="A0NGY0">
    <property type="interactions" value="813"/>
</dbReference>
<dbReference type="STRING" id="7165.A0NGY0"/>
<dbReference type="PaxDb" id="7165-AGAP001459-PA"/>
<dbReference type="EnsemblMetazoa" id="AGAP001459-RA">
    <property type="protein sequence ID" value="AGAP001459-PA"/>
    <property type="gene ID" value="AGAP001459"/>
</dbReference>
<dbReference type="EnsemblMetazoa" id="AGAP001459-RB">
    <property type="protein sequence ID" value="AGAP001459-PB"/>
    <property type="gene ID" value="AGAP001459"/>
</dbReference>
<dbReference type="EnsemblMetazoa" id="AGAP001459-RC">
    <property type="protein sequence ID" value="AGAP001459-PC"/>
    <property type="gene ID" value="AGAP001459"/>
</dbReference>
<dbReference type="GeneID" id="1281716"/>
<dbReference type="KEGG" id="aga:1281716"/>
<dbReference type="CTD" id="6139"/>
<dbReference type="VEuPathDB" id="VectorBase:AGAMI1_007301"/>
<dbReference type="VEuPathDB" id="VectorBase:AGAP001459"/>
<dbReference type="eggNOG" id="KOG3353">
    <property type="taxonomic scope" value="Eukaryota"/>
</dbReference>
<dbReference type="HOGENOM" id="CLU_083987_0_1_1"/>
<dbReference type="InParanoid" id="A0NGY0"/>
<dbReference type="OMA" id="QVNHAPC"/>
<dbReference type="PhylomeDB" id="A0NGY0"/>
<dbReference type="Proteomes" id="UP000007062">
    <property type="component" value="Chromosome 2R"/>
</dbReference>
<dbReference type="GO" id="GO:0022625">
    <property type="term" value="C:cytosolic large ribosomal subunit"/>
    <property type="evidence" value="ECO:0000318"/>
    <property type="project" value="GO_Central"/>
</dbReference>
<dbReference type="GO" id="GO:0003735">
    <property type="term" value="F:structural constituent of ribosome"/>
    <property type="evidence" value="ECO:0000318"/>
    <property type="project" value="GO_Central"/>
</dbReference>
<dbReference type="GO" id="GO:0002181">
    <property type="term" value="P:cytoplasmic translation"/>
    <property type="evidence" value="ECO:0000318"/>
    <property type="project" value="GO_Central"/>
</dbReference>
<dbReference type="CDD" id="cd00336">
    <property type="entry name" value="Ribosomal_L22"/>
    <property type="match status" value="1"/>
</dbReference>
<dbReference type="FunFam" id="3.90.470.10:FF:000003">
    <property type="entry name" value="60S ribosomal protein L17"/>
    <property type="match status" value="1"/>
</dbReference>
<dbReference type="Gene3D" id="3.90.470.10">
    <property type="entry name" value="Ribosomal protein L22/L17"/>
    <property type="match status" value="1"/>
</dbReference>
<dbReference type="HAMAP" id="MF_01331_A">
    <property type="entry name" value="Ribosomal_uL22_A"/>
    <property type="match status" value="1"/>
</dbReference>
<dbReference type="InterPro" id="IPR001063">
    <property type="entry name" value="Ribosomal_uL22"/>
</dbReference>
<dbReference type="InterPro" id="IPR018260">
    <property type="entry name" value="Ribosomal_uL22_CS"/>
</dbReference>
<dbReference type="InterPro" id="IPR005721">
    <property type="entry name" value="Ribosomal_uL22_euk/arc"/>
</dbReference>
<dbReference type="InterPro" id="IPR036394">
    <property type="entry name" value="Ribosomal_uL22_sf"/>
</dbReference>
<dbReference type="NCBIfam" id="NF003260">
    <property type="entry name" value="PRK04223.1"/>
    <property type="match status" value="1"/>
</dbReference>
<dbReference type="NCBIfam" id="TIGR01038">
    <property type="entry name" value="uL22_arch_euk"/>
    <property type="match status" value="1"/>
</dbReference>
<dbReference type="PANTHER" id="PTHR11593">
    <property type="entry name" value="60S RIBOSOMAL PROTEIN L17"/>
    <property type="match status" value="1"/>
</dbReference>
<dbReference type="PANTHER" id="PTHR11593:SF10">
    <property type="entry name" value="60S RIBOSOMAL PROTEIN L17"/>
    <property type="match status" value="1"/>
</dbReference>
<dbReference type="Pfam" id="PF00237">
    <property type="entry name" value="Ribosomal_L22"/>
    <property type="match status" value="1"/>
</dbReference>
<dbReference type="SUPFAM" id="SSF54843">
    <property type="entry name" value="Ribosomal protein L22"/>
    <property type="match status" value="1"/>
</dbReference>
<dbReference type="PROSITE" id="PS00464">
    <property type="entry name" value="RIBOSOMAL_L22"/>
    <property type="match status" value="1"/>
</dbReference>